<keyword id="KW-1185">Reference proteome</keyword>
<name>FB192_ARATH</name>
<reference key="1">
    <citation type="journal article" date="2000" name="Nature">
        <title>Sequence and analysis of chromosome 3 of the plant Arabidopsis thaliana.</title>
        <authorList>
            <person name="Salanoubat M."/>
            <person name="Lemcke K."/>
            <person name="Rieger M."/>
            <person name="Ansorge W."/>
            <person name="Unseld M."/>
            <person name="Fartmann B."/>
            <person name="Valle G."/>
            <person name="Bloecker H."/>
            <person name="Perez-Alonso M."/>
            <person name="Obermaier B."/>
            <person name="Delseny M."/>
            <person name="Boutry M."/>
            <person name="Grivell L.A."/>
            <person name="Mache R."/>
            <person name="Puigdomenech P."/>
            <person name="De Simone V."/>
            <person name="Choisne N."/>
            <person name="Artiguenave F."/>
            <person name="Robert C."/>
            <person name="Brottier P."/>
            <person name="Wincker P."/>
            <person name="Cattolico L."/>
            <person name="Weissenbach J."/>
            <person name="Saurin W."/>
            <person name="Quetier F."/>
            <person name="Schaefer M."/>
            <person name="Mueller-Auer S."/>
            <person name="Gabel C."/>
            <person name="Fuchs M."/>
            <person name="Benes V."/>
            <person name="Wurmbach E."/>
            <person name="Drzonek H."/>
            <person name="Erfle H."/>
            <person name="Jordan N."/>
            <person name="Bangert S."/>
            <person name="Wiedelmann R."/>
            <person name="Kranz H."/>
            <person name="Voss H."/>
            <person name="Holland R."/>
            <person name="Brandt P."/>
            <person name="Nyakatura G."/>
            <person name="Vezzi A."/>
            <person name="D'Angelo M."/>
            <person name="Pallavicini A."/>
            <person name="Toppo S."/>
            <person name="Simionati B."/>
            <person name="Conrad A."/>
            <person name="Hornischer K."/>
            <person name="Kauer G."/>
            <person name="Loehnert T.-H."/>
            <person name="Nordsiek G."/>
            <person name="Reichelt J."/>
            <person name="Scharfe M."/>
            <person name="Schoen O."/>
            <person name="Bargues M."/>
            <person name="Terol J."/>
            <person name="Climent J."/>
            <person name="Navarro P."/>
            <person name="Collado C."/>
            <person name="Perez-Perez A."/>
            <person name="Ottenwaelder B."/>
            <person name="Duchemin D."/>
            <person name="Cooke R."/>
            <person name="Laudie M."/>
            <person name="Berger-Llauro C."/>
            <person name="Purnelle B."/>
            <person name="Masuy D."/>
            <person name="de Haan M."/>
            <person name="Maarse A.C."/>
            <person name="Alcaraz J.-P."/>
            <person name="Cottet A."/>
            <person name="Casacuberta E."/>
            <person name="Monfort A."/>
            <person name="Argiriou A."/>
            <person name="Flores M."/>
            <person name="Liguori R."/>
            <person name="Vitale D."/>
            <person name="Mannhaupt G."/>
            <person name="Haase D."/>
            <person name="Schoof H."/>
            <person name="Rudd S."/>
            <person name="Zaccaria P."/>
            <person name="Mewes H.-W."/>
            <person name="Mayer K.F.X."/>
            <person name="Kaul S."/>
            <person name="Town C.D."/>
            <person name="Koo H.L."/>
            <person name="Tallon L.J."/>
            <person name="Jenkins J."/>
            <person name="Rooney T."/>
            <person name="Rizzo M."/>
            <person name="Walts A."/>
            <person name="Utterback T."/>
            <person name="Fujii C.Y."/>
            <person name="Shea T.P."/>
            <person name="Creasy T.H."/>
            <person name="Haas B."/>
            <person name="Maiti R."/>
            <person name="Wu D."/>
            <person name="Peterson J."/>
            <person name="Van Aken S."/>
            <person name="Pai G."/>
            <person name="Militscher J."/>
            <person name="Sellers P."/>
            <person name="Gill J.E."/>
            <person name="Feldblyum T.V."/>
            <person name="Preuss D."/>
            <person name="Lin X."/>
            <person name="Nierman W.C."/>
            <person name="Salzberg S.L."/>
            <person name="White O."/>
            <person name="Venter J.C."/>
            <person name="Fraser C.M."/>
            <person name="Kaneko T."/>
            <person name="Nakamura Y."/>
            <person name="Sato S."/>
            <person name="Kato T."/>
            <person name="Asamizu E."/>
            <person name="Sasamoto S."/>
            <person name="Kimura T."/>
            <person name="Idesawa K."/>
            <person name="Kawashima K."/>
            <person name="Kishida Y."/>
            <person name="Kiyokawa C."/>
            <person name="Kohara M."/>
            <person name="Matsumoto M."/>
            <person name="Matsuno A."/>
            <person name="Muraki A."/>
            <person name="Nakayama S."/>
            <person name="Nakazaki N."/>
            <person name="Shinpo S."/>
            <person name="Takeuchi C."/>
            <person name="Wada T."/>
            <person name="Watanabe A."/>
            <person name="Yamada M."/>
            <person name="Yasuda M."/>
            <person name="Tabata S."/>
        </authorList>
    </citation>
    <scope>NUCLEOTIDE SEQUENCE [LARGE SCALE GENOMIC DNA]</scope>
    <source>
        <strain>cv. Columbia</strain>
    </source>
</reference>
<reference key="2">
    <citation type="journal article" date="2017" name="Plant J.">
        <title>Araport11: a complete reannotation of the Arabidopsis thaliana reference genome.</title>
        <authorList>
            <person name="Cheng C.Y."/>
            <person name="Krishnakumar V."/>
            <person name="Chan A.P."/>
            <person name="Thibaud-Nissen F."/>
            <person name="Schobel S."/>
            <person name="Town C.D."/>
        </authorList>
    </citation>
    <scope>GENOME REANNOTATION</scope>
    <source>
        <strain>cv. Columbia</strain>
    </source>
</reference>
<gene>
    <name type="ordered locus">At3g42722</name>
    <name type="ORF">F7P3</name>
</gene>
<proteinExistence type="uncertain"/>
<feature type="chain" id="PRO_0000283462" description="Putative F-box protein At3g42722">
    <location>
        <begin position="1"/>
        <end position="129"/>
    </location>
</feature>
<feature type="domain" description="F-box">
    <location>
        <begin position="4"/>
        <end position="50"/>
    </location>
</feature>
<accession>Q3EAR3</accession>
<evidence type="ECO:0000305" key="1"/>
<comment type="caution">
    <text evidence="1">Could be the product of a pseudogene.</text>
</comment>
<dbReference type="EMBL" id="AL138663">
    <property type="status" value="NOT_ANNOTATED_CDS"/>
    <property type="molecule type" value="Genomic_DNA"/>
</dbReference>
<dbReference type="EMBL" id="CP002686">
    <property type="status" value="NOT_ANNOTATED_CDS"/>
    <property type="molecule type" value="Genomic_DNA"/>
</dbReference>
<dbReference type="STRING" id="3702.Q3EAR3"/>
<dbReference type="Araport" id="AT3G42722"/>
<dbReference type="TAIR" id="AT3G42722"/>
<dbReference type="InParanoid" id="Q3EAR3"/>
<dbReference type="Proteomes" id="UP000006548">
    <property type="component" value="Chromosome 3"/>
</dbReference>
<dbReference type="ExpressionAtlas" id="Q3EAR3">
    <property type="expression patterns" value="baseline and differential"/>
</dbReference>
<dbReference type="Gene3D" id="1.20.1280.50">
    <property type="match status" value="1"/>
</dbReference>
<dbReference type="InterPro" id="IPR036047">
    <property type="entry name" value="F-box-like_dom_sf"/>
</dbReference>
<dbReference type="InterPro" id="IPR001810">
    <property type="entry name" value="F-box_dom"/>
</dbReference>
<dbReference type="InterPro" id="IPR055294">
    <property type="entry name" value="FBL60-like"/>
</dbReference>
<dbReference type="PANTHER" id="PTHR31293">
    <property type="entry name" value="RNI-LIKE SUPERFAMILY PROTEIN"/>
    <property type="match status" value="1"/>
</dbReference>
<dbReference type="PANTHER" id="PTHR31293:SF16">
    <property type="entry name" value="RNI-LIKE SUPERFAMILY PROTEIN"/>
    <property type="match status" value="1"/>
</dbReference>
<dbReference type="Pfam" id="PF00646">
    <property type="entry name" value="F-box"/>
    <property type="match status" value="1"/>
</dbReference>
<dbReference type="SUPFAM" id="SSF81383">
    <property type="entry name" value="F-box domain"/>
    <property type="match status" value="1"/>
</dbReference>
<protein>
    <recommendedName>
        <fullName>Putative F-box protein At3g42722</fullName>
    </recommendedName>
</protein>
<organism>
    <name type="scientific">Arabidopsis thaliana</name>
    <name type="common">Mouse-ear cress</name>
    <dbReference type="NCBI Taxonomy" id="3702"/>
    <lineage>
        <taxon>Eukaryota</taxon>
        <taxon>Viridiplantae</taxon>
        <taxon>Streptophyta</taxon>
        <taxon>Embryophyta</taxon>
        <taxon>Tracheophyta</taxon>
        <taxon>Spermatophyta</taxon>
        <taxon>Magnoliopsida</taxon>
        <taxon>eudicotyledons</taxon>
        <taxon>Gunneridae</taxon>
        <taxon>Pentapetalae</taxon>
        <taxon>rosids</taxon>
        <taxon>malvids</taxon>
        <taxon>Brassicales</taxon>
        <taxon>Brassicaceae</taxon>
        <taxon>Camelineae</taxon>
        <taxon>Arabidopsis</taxon>
    </lineage>
</organism>
<sequence length="129" mass="15042">MCCMASIDCLPDELLVGILSFILTNEAASTSILSKRWRTLFAFSHNLDCNDSIFCHPRKNKRKSFRYFLYKTLANLEGYSRIKKLSLKFDEKSNIREGHGKLVVNHWICNALEHGVSELHLCFEYMGWY</sequence>